<gene>
    <name evidence="1" type="primary">rpmI</name>
    <name type="ordered locus">Bpet2643</name>
</gene>
<protein>
    <recommendedName>
        <fullName evidence="1">Large ribosomal subunit protein bL35</fullName>
    </recommendedName>
    <alternativeName>
        <fullName evidence="3">50S ribosomal protein L35</fullName>
    </alternativeName>
</protein>
<name>RL35_BORPD</name>
<keyword id="KW-0687">Ribonucleoprotein</keyword>
<keyword id="KW-0689">Ribosomal protein</keyword>
<organism>
    <name type="scientific">Bordetella petrii (strain ATCC BAA-461 / DSM 12804 / CCUG 43448)</name>
    <dbReference type="NCBI Taxonomy" id="340100"/>
    <lineage>
        <taxon>Bacteria</taxon>
        <taxon>Pseudomonadati</taxon>
        <taxon>Pseudomonadota</taxon>
        <taxon>Betaproteobacteria</taxon>
        <taxon>Burkholderiales</taxon>
        <taxon>Alcaligenaceae</taxon>
        <taxon>Bordetella</taxon>
    </lineage>
</organism>
<sequence>MPKMKTKKSASKRFQVRGSGSIKRGQAFKRHILTKKTTKNKRQLRGSAAVHETNVASVKAMMPFA</sequence>
<reference key="1">
    <citation type="journal article" date="2008" name="BMC Genomics">
        <title>The missing link: Bordetella petrii is endowed with both the metabolic versatility of environmental bacteria and virulence traits of pathogenic Bordetellae.</title>
        <authorList>
            <person name="Gross R."/>
            <person name="Guzman C.A."/>
            <person name="Sebaihia M."/>
            <person name="Martin dos Santos V.A.P."/>
            <person name="Pieper D.H."/>
            <person name="Koebnik R."/>
            <person name="Lechner M."/>
            <person name="Bartels D."/>
            <person name="Buhrmester J."/>
            <person name="Choudhuri J.V."/>
            <person name="Ebensen T."/>
            <person name="Gaigalat L."/>
            <person name="Herrmann S."/>
            <person name="Khachane A.N."/>
            <person name="Larisch C."/>
            <person name="Link S."/>
            <person name="Linke B."/>
            <person name="Meyer F."/>
            <person name="Mormann S."/>
            <person name="Nakunst D."/>
            <person name="Rueckert C."/>
            <person name="Schneiker-Bekel S."/>
            <person name="Schulze K."/>
            <person name="Voerholter F.-J."/>
            <person name="Yevsa T."/>
            <person name="Engle J.T."/>
            <person name="Goldman W.E."/>
            <person name="Puehler A."/>
            <person name="Goebel U.B."/>
            <person name="Goesmann A."/>
            <person name="Bloecker H."/>
            <person name="Kaiser O."/>
            <person name="Martinez-Arias R."/>
        </authorList>
    </citation>
    <scope>NUCLEOTIDE SEQUENCE [LARGE SCALE GENOMIC DNA]</scope>
    <source>
        <strain>ATCC BAA-461 / DSM 12804 / CCUG 43448</strain>
    </source>
</reference>
<evidence type="ECO:0000255" key="1">
    <source>
        <dbReference type="HAMAP-Rule" id="MF_00514"/>
    </source>
</evidence>
<evidence type="ECO:0000256" key="2">
    <source>
        <dbReference type="SAM" id="MobiDB-lite"/>
    </source>
</evidence>
<evidence type="ECO:0000305" key="3"/>
<accession>A9IPU4</accession>
<dbReference type="EMBL" id="AM902716">
    <property type="protein sequence ID" value="CAP42985.1"/>
    <property type="molecule type" value="Genomic_DNA"/>
</dbReference>
<dbReference type="SMR" id="A9IPU4"/>
<dbReference type="STRING" id="94624.Bpet2643"/>
<dbReference type="KEGG" id="bpt:Bpet2643"/>
<dbReference type="eggNOG" id="COG0291">
    <property type="taxonomic scope" value="Bacteria"/>
</dbReference>
<dbReference type="Proteomes" id="UP000001225">
    <property type="component" value="Chromosome"/>
</dbReference>
<dbReference type="GO" id="GO:0022625">
    <property type="term" value="C:cytosolic large ribosomal subunit"/>
    <property type="evidence" value="ECO:0007669"/>
    <property type="project" value="TreeGrafter"/>
</dbReference>
<dbReference type="GO" id="GO:0003735">
    <property type="term" value="F:structural constituent of ribosome"/>
    <property type="evidence" value="ECO:0007669"/>
    <property type="project" value="InterPro"/>
</dbReference>
<dbReference type="GO" id="GO:0006412">
    <property type="term" value="P:translation"/>
    <property type="evidence" value="ECO:0007669"/>
    <property type="project" value="UniProtKB-UniRule"/>
</dbReference>
<dbReference type="FunFam" id="4.10.410.60:FF:000001">
    <property type="entry name" value="50S ribosomal protein L35"/>
    <property type="match status" value="1"/>
</dbReference>
<dbReference type="Gene3D" id="4.10.410.60">
    <property type="match status" value="1"/>
</dbReference>
<dbReference type="HAMAP" id="MF_00514">
    <property type="entry name" value="Ribosomal_bL35"/>
    <property type="match status" value="1"/>
</dbReference>
<dbReference type="InterPro" id="IPR001706">
    <property type="entry name" value="Ribosomal_bL35"/>
</dbReference>
<dbReference type="InterPro" id="IPR021137">
    <property type="entry name" value="Ribosomal_bL35-like"/>
</dbReference>
<dbReference type="InterPro" id="IPR018265">
    <property type="entry name" value="Ribosomal_bL35_CS"/>
</dbReference>
<dbReference type="InterPro" id="IPR037229">
    <property type="entry name" value="Ribosomal_bL35_sf"/>
</dbReference>
<dbReference type="NCBIfam" id="TIGR00001">
    <property type="entry name" value="rpmI_bact"/>
    <property type="match status" value="1"/>
</dbReference>
<dbReference type="PANTHER" id="PTHR33343">
    <property type="entry name" value="54S RIBOSOMAL PROTEIN BL35M"/>
    <property type="match status" value="1"/>
</dbReference>
<dbReference type="PANTHER" id="PTHR33343:SF1">
    <property type="entry name" value="LARGE RIBOSOMAL SUBUNIT PROTEIN BL35M"/>
    <property type="match status" value="1"/>
</dbReference>
<dbReference type="Pfam" id="PF01632">
    <property type="entry name" value="Ribosomal_L35p"/>
    <property type="match status" value="1"/>
</dbReference>
<dbReference type="PRINTS" id="PR00064">
    <property type="entry name" value="RIBOSOMALL35"/>
</dbReference>
<dbReference type="SUPFAM" id="SSF143034">
    <property type="entry name" value="L35p-like"/>
    <property type="match status" value="1"/>
</dbReference>
<dbReference type="PROSITE" id="PS00936">
    <property type="entry name" value="RIBOSOMAL_L35"/>
    <property type="match status" value="1"/>
</dbReference>
<comment type="similarity">
    <text evidence="1">Belongs to the bacterial ribosomal protein bL35 family.</text>
</comment>
<proteinExistence type="inferred from homology"/>
<feature type="chain" id="PRO_1000127314" description="Large ribosomal subunit protein bL35">
    <location>
        <begin position="1"/>
        <end position="65"/>
    </location>
</feature>
<feature type="region of interest" description="Disordered" evidence="2">
    <location>
        <begin position="1"/>
        <end position="27"/>
    </location>
</feature>
<feature type="compositionally biased region" description="Basic residues" evidence="2">
    <location>
        <begin position="1"/>
        <end position="15"/>
    </location>
</feature>